<dbReference type="EMBL" id="CP001173">
    <property type="protein sequence ID" value="ACI27236.1"/>
    <property type="molecule type" value="Genomic_DNA"/>
</dbReference>
<dbReference type="RefSeq" id="WP_000866288.1">
    <property type="nucleotide sequence ID" value="NC_011333.1"/>
</dbReference>
<dbReference type="SMR" id="B5Z6N7"/>
<dbReference type="KEGG" id="hpg:HPG27_473"/>
<dbReference type="HOGENOM" id="CLU_078938_3_0_7"/>
<dbReference type="Proteomes" id="UP000001735">
    <property type="component" value="Chromosome"/>
</dbReference>
<dbReference type="GO" id="GO:1990904">
    <property type="term" value="C:ribonucleoprotein complex"/>
    <property type="evidence" value="ECO:0007669"/>
    <property type="project" value="UniProtKB-KW"/>
</dbReference>
<dbReference type="GO" id="GO:0005840">
    <property type="term" value="C:ribosome"/>
    <property type="evidence" value="ECO:0007669"/>
    <property type="project" value="UniProtKB-KW"/>
</dbReference>
<dbReference type="GO" id="GO:0019843">
    <property type="term" value="F:rRNA binding"/>
    <property type="evidence" value="ECO:0007669"/>
    <property type="project" value="UniProtKB-UniRule"/>
</dbReference>
<dbReference type="GO" id="GO:0003735">
    <property type="term" value="F:structural constituent of ribosome"/>
    <property type="evidence" value="ECO:0007669"/>
    <property type="project" value="InterPro"/>
</dbReference>
<dbReference type="GO" id="GO:0006412">
    <property type="term" value="P:translation"/>
    <property type="evidence" value="ECO:0007669"/>
    <property type="project" value="UniProtKB-UniRule"/>
</dbReference>
<dbReference type="FunFam" id="3.10.430.100:FF:000003">
    <property type="entry name" value="50S ribosomal protein L9"/>
    <property type="match status" value="1"/>
</dbReference>
<dbReference type="FunFam" id="3.40.5.10:FF:000002">
    <property type="entry name" value="50S ribosomal protein L9"/>
    <property type="match status" value="1"/>
</dbReference>
<dbReference type="Gene3D" id="3.10.430.100">
    <property type="entry name" value="Ribosomal protein L9, C-terminal domain"/>
    <property type="match status" value="1"/>
</dbReference>
<dbReference type="Gene3D" id="3.40.5.10">
    <property type="entry name" value="Ribosomal protein L9, N-terminal domain"/>
    <property type="match status" value="1"/>
</dbReference>
<dbReference type="HAMAP" id="MF_00503">
    <property type="entry name" value="Ribosomal_bL9"/>
    <property type="match status" value="1"/>
</dbReference>
<dbReference type="InterPro" id="IPR000244">
    <property type="entry name" value="Ribosomal_bL9"/>
</dbReference>
<dbReference type="InterPro" id="IPR009027">
    <property type="entry name" value="Ribosomal_bL9/RNase_H1_N"/>
</dbReference>
<dbReference type="InterPro" id="IPR020594">
    <property type="entry name" value="Ribosomal_bL9_bac/chp"/>
</dbReference>
<dbReference type="InterPro" id="IPR020069">
    <property type="entry name" value="Ribosomal_bL9_C"/>
</dbReference>
<dbReference type="InterPro" id="IPR036791">
    <property type="entry name" value="Ribosomal_bL9_C_sf"/>
</dbReference>
<dbReference type="InterPro" id="IPR020070">
    <property type="entry name" value="Ribosomal_bL9_N"/>
</dbReference>
<dbReference type="InterPro" id="IPR036935">
    <property type="entry name" value="Ribosomal_bL9_N_sf"/>
</dbReference>
<dbReference type="NCBIfam" id="TIGR00158">
    <property type="entry name" value="L9"/>
    <property type="match status" value="1"/>
</dbReference>
<dbReference type="PANTHER" id="PTHR21368">
    <property type="entry name" value="50S RIBOSOMAL PROTEIN L9"/>
    <property type="match status" value="1"/>
</dbReference>
<dbReference type="Pfam" id="PF03948">
    <property type="entry name" value="Ribosomal_L9_C"/>
    <property type="match status" value="1"/>
</dbReference>
<dbReference type="Pfam" id="PF01281">
    <property type="entry name" value="Ribosomal_L9_N"/>
    <property type="match status" value="1"/>
</dbReference>
<dbReference type="SUPFAM" id="SSF55658">
    <property type="entry name" value="L9 N-domain-like"/>
    <property type="match status" value="1"/>
</dbReference>
<dbReference type="SUPFAM" id="SSF55653">
    <property type="entry name" value="Ribosomal protein L9 C-domain"/>
    <property type="match status" value="1"/>
</dbReference>
<dbReference type="PROSITE" id="PS00651">
    <property type="entry name" value="RIBOSOMAL_L9"/>
    <property type="match status" value="1"/>
</dbReference>
<keyword id="KW-1185">Reference proteome</keyword>
<keyword id="KW-0687">Ribonucleoprotein</keyword>
<keyword id="KW-0689">Ribosomal protein</keyword>
<keyword id="KW-0694">RNA-binding</keyword>
<keyword id="KW-0699">rRNA-binding</keyword>
<protein>
    <recommendedName>
        <fullName evidence="1">Large ribosomal subunit protein bL9</fullName>
    </recommendedName>
    <alternativeName>
        <fullName evidence="2">50S ribosomal protein L9</fullName>
    </alternativeName>
</protein>
<reference key="1">
    <citation type="journal article" date="2009" name="J. Bacteriol.">
        <title>The complete genome sequence of Helicobacter pylori strain G27.</title>
        <authorList>
            <person name="Baltrus D.A."/>
            <person name="Amieva M.R."/>
            <person name="Covacci A."/>
            <person name="Lowe T.M."/>
            <person name="Merrell D.S."/>
            <person name="Ottemann K.M."/>
            <person name="Stein M."/>
            <person name="Salama N.R."/>
            <person name="Guillemin K."/>
        </authorList>
    </citation>
    <scope>NUCLEOTIDE SEQUENCE [LARGE SCALE GENOMIC DNA]</scope>
    <source>
        <strain>G27</strain>
    </source>
</reference>
<organism>
    <name type="scientific">Helicobacter pylori (strain G27)</name>
    <dbReference type="NCBI Taxonomy" id="563041"/>
    <lineage>
        <taxon>Bacteria</taxon>
        <taxon>Pseudomonadati</taxon>
        <taxon>Campylobacterota</taxon>
        <taxon>Epsilonproteobacteria</taxon>
        <taxon>Campylobacterales</taxon>
        <taxon>Helicobacteraceae</taxon>
        <taxon>Helicobacter</taxon>
    </lineage>
</organism>
<evidence type="ECO:0000255" key="1">
    <source>
        <dbReference type="HAMAP-Rule" id="MF_00503"/>
    </source>
</evidence>
<evidence type="ECO:0000305" key="2"/>
<gene>
    <name evidence="1" type="primary">rplI</name>
    <name type="ordered locus">HPG27_473</name>
</gene>
<proteinExistence type="inferred from homology"/>
<accession>B5Z6N7</accession>
<sequence length="149" mass="16522">MKVLLLEDVKNLGKAGEVCEVKDGYGNNFLIANQKAKLATNEVINKYKAEVKKKAEKEALEKAQKLQMVETLQTITLTIHKKVGANGSLFGAITKEEITERLKEQHASLNLDKKDIELKHPIKSTGIYEIEVKLGFGVVGTFKIDVVAE</sequence>
<name>RL9_HELPG</name>
<feature type="chain" id="PRO_1000126923" description="Large ribosomal subunit protein bL9">
    <location>
        <begin position="1"/>
        <end position="149"/>
    </location>
</feature>
<comment type="function">
    <text evidence="1">Binds to the 23S rRNA.</text>
</comment>
<comment type="similarity">
    <text evidence="1">Belongs to the bacterial ribosomal protein bL9 family.</text>
</comment>